<evidence type="ECO:0000255" key="1">
    <source>
        <dbReference type="HAMAP-Rule" id="MF_00332"/>
    </source>
</evidence>
<evidence type="ECO:0000256" key="2">
    <source>
        <dbReference type="SAM" id="MobiDB-lite"/>
    </source>
</evidence>
<name>DNAK_PSEPK</name>
<feature type="chain" id="PRO_0000078519" description="Chaperone protein DnaK">
    <location>
        <begin position="1"/>
        <end position="641"/>
    </location>
</feature>
<feature type="region of interest" description="Disordered" evidence="2">
    <location>
        <begin position="602"/>
        <end position="641"/>
    </location>
</feature>
<feature type="compositionally biased region" description="Low complexity" evidence="2">
    <location>
        <begin position="604"/>
        <end position="619"/>
    </location>
</feature>
<feature type="compositionally biased region" description="Basic and acidic residues" evidence="2">
    <location>
        <begin position="620"/>
        <end position="641"/>
    </location>
</feature>
<feature type="modified residue" description="Phosphothreonine; by autocatalysis" evidence="1">
    <location>
        <position position="199"/>
    </location>
</feature>
<dbReference type="EMBL" id="AE015451">
    <property type="protein sequence ID" value="AAN70299.1"/>
    <property type="molecule type" value="Genomic_DNA"/>
</dbReference>
<dbReference type="RefSeq" id="NP_746835.1">
    <property type="nucleotide sequence ID" value="NC_002947.4"/>
</dbReference>
<dbReference type="RefSeq" id="WP_010955366.1">
    <property type="nucleotide sequence ID" value="NZ_CP169744.1"/>
</dbReference>
<dbReference type="SMR" id="Q88DU2"/>
<dbReference type="STRING" id="160488.PP_4727"/>
<dbReference type="PaxDb" id="160488-PP_4727"/>
<dbReference type="GeneID" id="83682444"/>
<dbReference type="KEGG" id="ppu:PP_4727"/>
<dbReference type="PATRIC" id="fig|160488.4.peg.5038"/>
<dbReference type="eggNOG" id="COG0443">
    <property type="taxonomic scope" value="Bacteria"/>
</dbReference>
<dbReference type="HOGENOM" id="CLU_005965_2_1_6"/>
<dbReference type="OrthoDB" id="9766019at2"/>
<dbReference type="PhylomeDB" id="Q88DU2"/>
<dbReference type="BioCyc" id="PPUT160488:G1G01-5055-MONOMER"/>
<dbReference type="Proteomes" id="UP000000556">
    <property type="component" value="Chromosome"/>
</dbReference>
<dbReference type="GO" id="GO:0005524">
    <property type="term" value="F:ATP binding"/>
    <property type="evidence" value="ECO:0007669"/>
    <property type="project" value="UniProtKB-UniRule"/>
</dbReference>
<dbReference type="GO" id="GO:0140662">
    <property type="term" value="F:ATP-dependent protein folding chaperone"/>
    <property type="evidence" value="ECO:0007669"/>
    <property type="project" value="InterPro"/>
</dbReference>
<dbReference type="GO" id="GO:0051082">
    <property type="term" value="F:unfolded protein binding"/>
    <property type="evidence" value="ECO:0007669"/>
    <property type="project" value="InterPro"/>
</dbReference>
<dbReference type="CDD" id="cd10234">
    <property type="entry name" value="ASKHA_NBD_HSP70_DnaK-like"/>
    <property type="match status" value="1"/>
</dbReference>
<dbReference type="FunFam" id="2.60.34.10:FF:000014">
    <property type="entry name" value="Chaperone protein DnaK HSP70"/>
    <property type="match status" value="1"/>
</dbReference>
<dbReference type="FunFam" id="1.20.1270.10:FF:000001">
    <property type="entry name" value="Molecular chaperone DnaK"/>
    <property type="match status" value="1"/>
</dbReference>
<dbReference type="FunFam" id="3.30.420.40:FF:000004">
    <property type="entry name" value="Molecular chaperone DnaK"/>
    <property type="match status" value="1"/>
</dbReference>
<dbReference type="FunFam" id="3.90.640.10:FF:000003">
    <property type="entry name" value="Molecular chaperone DnaK"/>
    <property type="match status" value="1"/>
</dbReference>
<dbReference type="Gene3D" id="1.20.1270.10">
    <property type="match status" value="1"/>
</dbReference>
<dbReference type="Gene3D" id="3.30.420.40">
    <property type="match status" value="2"/>
</dbReference>
<dbReference type="Gene3D" id="3.90.640.10">
    <property type="entry name" value="Actin, Chain A, domain 4"/>
    <property type="match status" value="1"/>
</dbReference>
<dbReference type="Gene3D" id="2.60.34.10">
    <property type="entry name" value="Substrate Binding Domain Of DNAk, Chain A, domain 1"/>
    <property type="match status" value="1"/>
</dbReference>
<dbReference type="HAMAP" id="MF_00332">
    <property type="entry name" value="DnaK"/>
    <property type="match status" value="1"/>
</dbReference>
<dbReference type="InterPro" id="IPR043129">
    <property type="entry name" value="ATPase_NBD"/>
</dbReference>
<dbReference type="InterPro" id="IPR012725">
    <property type="entry name" value="Chaperone_DnaK"/>
</dbReference>
<dbReference type="InterPro" id="IPR018181">
    <property type="entry name" value="Heat_shock_70_CS"/>
</dbReference>
<dbReference type="InterPro" id="IPR029048">
    <property type="entry name" value="HSP70_C_sf"/>
</dbReference>
<dbReference type="InterPro" id="IPR029047">
    <property type="entry name" value="HSP70_peptide-bd_sf"/>
</dbReference>
<dbReference type="InterPro" id="IPR013126">
    <property type="entry name" value="Hsp_70_fam"/>
</dbReference>
<dbReference type="NCBIfam" id="NF001413">
    <property type="entry name" value="PRK00290.1"/>
    <property type="match status" value="1"/>
</dbReference>
<dbReference type="NCBIfam" id="NF003520">
    <property type="entry name" value="PRK05183.1"/>
    <property type="match status" value="1"/>
</dbReference>
<dbReference type="NCBIfam" id="TIGR02350">
    <property type="entry name" value="prok_dnaK"/>
    <property type="match status" value="1"/>
</dbReference>
<dbReference type="PANTHER" id="PTHR19375">
    <property type="entry name" value="HEAT SHOCK PROTEIN 70KDA"/>
    <property type="match status" value="1"/>
</dbReference>
<dbReference type="Pfam" id="PF00012">
    <property type="entry name" value="HSP70"/>
    <property type="match status" value="1"/>
</dbReference>
<dbReference type="PRINTS" id="PR00301">
    <property type="entry name" value="HEATSHOCK70"/>
</dbReference>
<dbReference type="SUPFAM" id="SSF53067">
    <property type="entry name" value="Actin-like ATPase domain"/>
    <property type="match status" value="2"/>
</dbReference>
<dbReference type="SUPFAM" id="SSF100934">
    <property type="entry name" value="Heat shock protein 70kD (HSP70), C-terminal subdomain"/>
    <property type="match status" value="1"/>
</dbReference>
<dbReference type="SUPFAM" id="SSF100920">
    <property type="entry name" value="Heat shock protein 70kD (HSP70), peptide-binding domain"/>
    <property type="match status" value="1"/>
</dbReference>
<dbReference type="PROSITE" id="PS00297">
    <property type="entry name" value="HSP70_1"/>
    <property type="match status" value="1"/>
</dbReference>
<dbReference type="PROSITE" id="PS00329">
    <property type="entry name" value="HSP70_2"/>
    <property type="match status" value="1"/>
</dbReference>
<dbReference type="PROSITE" id="PS01036">
    <property type="entry name" value="HSP70_3"/>
    <property type="match status" value="1"/>
</dbReference>
<accession>Q88DU2</accession>
<sequence length="641" mass="68801">MGKIIGIDLGTTNSCVSILENGNVKVIENAEGARTTPSIVAYANDGEILVGQSAKRQAVTNPHNTLFAVKRLIGRRFEEDVVQKDIKLVPYKIVKANNGDAWVEAAGKEMAPPQISAEVLKKMKKTAEDYLGEPVTEAVITVPAYFNDSQRQATKDAGRIAGLDVKRIINEPTAAALAYGMDKAKGDHTVIVYDLGGGTFDVSVIEIAEVDGEHQFEVLATNGDTFLGGEDFDMRLIDYLVDEFKKESGMDLKNDPLALQRLKEAAEKAKIELSSAQSTDVNLPYITADATGPKHLNVKISRAKLESLVEDLVKRTIEPCRIALKDAGIDASKIDDVILVGGQTRMPLVQKEVADFFGKEARKDVNPDEAVAMGAAIQGAVLAGDVKDVLLLDVSPLTLGIETMGGVMTALIEKNTTIPTKKSQVFSTADDNQSAVTIHVLQGERKQAAQNKSLGKFDLADIPPAPRGVPQIEVTFDIDANGILHVGAKDKATGKTQSIVIKANSGLSDEEIERMVRDAEANAEEDRKFEELAAARNQGDALVHSTRKMVADAGDKVTAEEKTAIEAAVVALEAAVKGDDKAAIDAKVEELSKVSAPVAQKMYAEQSAEQPQGGAQQAEPEAKHDDVVDAEFEEVKDNNKQ</sequence>
<organism>
    <name type="scientific">Pseudomonas putida (strain ATCC 47054 / DSM 6125 / CFBP 8728 / NCIMB 11950 / KT2440)</name>
    <dbReference type="NCBI Taxonomy" id="160488"/>
    <lineage>
        <taxon>Bacteria</taxon>
        <taxon>Pseudomonadati</taxon>
        <taxon>Pseudomonadota</taxon>
        <taxon>Gammaproteobacteria</taxon>
        <taxon>Pseudomonadales</taxon>
        <taxon>Pseudomonadaceae</taxon>
        <taxon>Pseudomonas</taxon>
    </lineage>
</organism>
<gene>
    <name evidence="1" type="primary">dnaK</name>
    <name type="ordered locus">PP_4727</name>
</gene>
<reference key="1">
    <citation type="journal article" date="2002" name="Environ. Microbiol.">
        <title>Complete genome sequence and comparative analysis of the metabolically versatile Pseudomonas putida KT2440.</title>
        <authorList>
            <person name="Nelson K.E."/>
            <person name="Weinel C."/>
            <person name="Paulsen I.T."/>
            <person name="Dodson R.J."/>
            <person name="Hilbert H."/>
            <person name="Martins dos Santos V.A.P."/>
            <person name="Fouts D.E."/>
            <person name="Gill S.R."/>
            <person name="Pop M."/>
            <person name="Holmes M."/>
            <person name="Brinkac L.M."/>
            <person name="Beanan M.J."/>
            <person name="DeBoy R.T."/>
            <person name="Daugherty S.C."/>
            <person name="Kolonay J.F."/>
            <person name="Madupu R."/>
            <person name="Nelson W.C."/>
            <person name="White O."/>
            <person name="Peterson J.D."/>
            <person name="Khouri H.M."/>
            <person name="Hance I."/>
            <person name="Chris Lee P."/>
            <person name="Holtzapple E.K."/>
            <person name="Scanlan D."/>
            <person name="Tran K."/>
            <person name="Moazzez A."/>
            <person name="Utterback T.R."/>
            <person name="Rizzo M."/>
            <person name="Lee K."/>
            <person name="Kosack D."/>
            <person name="Moestl D."/>
            <person name="Wedler H."/>
            <person name="Lauber J."/>
            <person name="Stjepandic D."/>
            <person name="Hoheisel J."/>
            <person name="Straetz M."/>
            <person name="Heim S."/>
            <person name="Kiewitz C."/>
            <person name="Eisen J.A."/>
            <person name="Timmis K.N."/>
            <person name="Duesterhoeft A."/>
            <person name="Tuemmler B."/>
            <person name="Fraser C.M."/>
        </authorList>
    </citation>
    <scope>NUCLEOTIDE SEQUENCE [LARGE SCALE GENOMIC DNA]</scope>
    <source>
        <strain>ATCC 47054 / DSM 6125 / CFBP 8728 / NCIMB 11950 / KT2440</strain>
    </source>
</reference>
<keyword id="KW-0067">ATP-binding</keyword>
<keyword id="KW-0143">Chaperone</keyword>
<keyword id="KW-0547">Nucleotide-binding</keyword>
<keyword id="KW-0597">Phosphoprotein</keyword>
<keyword id="KW-1185">Reference proteome</keyword>
<keyword id="KW-0346">Stress response</keyword>
<protein>
    <recommendedName>
        <fullName evidence="1">Chaperone protein DnaK</fullName>
    </recommendedName>
    <alternativeName>
        <fullName evidence="1">HSP70</fullName>
    </alternativeName>
    <alternativeName>
        <fullName evidence="1">Heat shock 70 kDa protein</fullName>
    </alternativeName>
    <alternativeName>
        <fullName evidence="1">Heat shock protein 70</fullName>
    </alternativeName>
</protein>
<comment type="function">
    <text evidence="1">Acts as a chaperone.</text>
</comment>
<comment type="induction">
    <text evidence="1">By stress conditions e.g. heat shock.</text>
</comment>
<comment type="similarity">
    <text evidence="1">Belongs to the heat shock protein 70 family.</text>
</comment>
<proteinExistence type="inferred from homology"/>